<protein>
    <recommendedName>
        <fullName>General transcription and DNA repair factor IIH subunit TFB2</fullName>
        <shortName>TFIIH subunit TFB2</shortName>
    </recommendedName>
    <alternativeName>
        <fullName>RNA polymerase II transcription factor B subunit 2</fullName>
    </alternativeName>
</protein>
<organism>
    <name type="scientific">Eremothecium gossypii (strain ATCC 10895 / CBS 109.51 / FGSC 9923 / NRRL Y-1056)</name>
    <name type="common">Yeast</name>
    <name type="synonym">Ashbya gossypii</name>
    <dbReference type="NCBI Taxonomy" id="284811"/>
    <lineage>
        <taxon>Eukaryota</taxon>
        <taxon>Fungi</taxon>
        <taxon>Dikarya</taxon>
        <taxon>Ascomycota</taxon>
        <taxon>Saccharomycotina</taxon>
        <taxon>Saccharomycetes</taxon>
        <taxon>Saccharomycetales</taxon>
        <taxon>Saccharomycetaceae</taxon>
        <taxon>Eremothecium</taxon>
    </lineage>
</organism>
<evidence type="ECO:0000250" key="1"/>
<evidence type="ECO:0000250" key="2">
    <source>
        <dbReference type="UniProtKB" id="Q02939"/>
    </source>
</evidence>
<evidence type="ECO:0000305" key="3"/>
<dbReference type="EMBL" id="AE016817">
    <property type="protein sequence ID" value="AAS51646.1"/>
    <property type="molecule type" value="Genomic_DNA"/>
</dbReference>
<dbReference type="RefSeq" id="NP_983822.1">
    <property type="nucleotide sequence ID" value="NM_209175.1"/>
</dbReference>
<dbReference type="SMR" id="Q75B51"/>
<dbReference type="FunCoup" id="Q75B51">
    <property type="interactions" value="537"/>
</dbReference>
<dbReference type="STRING" id="284811.Q75B51"/>
<dbReference type="EnsemblFungi" id="AAS51646">
    <property type="protein sequence ID" value="AAS51646"/>
    <property type="gene ID" value="AGOS_ADL274W"/>
</dbReference>
<dbReference type="GeneID" id="4619957"/>
<dbReference type="KEGG" id="ago:AGOS_ADL274W"/>
<dbReference type="eggNOG" id="KOG3471">
    <property type="taxonomic scope" value="Eukaryota"/>
</dbReference>
<dbReference type="HOGENOM" id="CLU_027280_4_0_1"/>
<dbReference type="InParanoid" id="Q75B51"/>
<dbReference type="OMA" id="KGFIIIE"/>
<dbReference type="OrthoDB" id="364513at2759"/>
<dbReference type="Proteomes" id="UP000000591">
    <property type="component" value="Chromosome IV"/>
</dbReference>
<dbReference type="GO" id="GO:0000112">
    <property type="term" value="C:nucleotide-excision repair factor 3 complex"/>
    <property type="evidence" value="ECO:0007669"/>
    <property type="project" value="EnsemblFungi"/>
</dbReference>
<dbReference type="GO" id="GO:0000439">
    <property type="term" value="C:transcription factor TFIIH core complex"/>
    <property type="evidence" value="ECO:0000318"/>
    <property type="project" value="GO_Central"/>
</dbReference>
<dbReference type="GO" id="GO:0005675">
    <property type="term" value="C:transcription factor TFIIH holo complex"/>
    <property type="evidence" value="ECO:0000318"/>
    <property type="project" value="GO_Central"/>
</dbReference>
<dbReference type="GO" id="GO:0001671">
    <property type="term" value="F:ATPase activator activity"/>
    <property type="evidence" value="ECO:0007669"/>
    <property type="project" value="InterPro"/>
</dbReference>
<dbReference type="GO" id="GO:0003690">
    <property type="term" value="F:double-stranded DNA binding"/>
    <property type="evidence" value="ECO:0000318"/>
    <property type="project" value="GO_Central"/>
</dbReference>
<dbReference type="GO" id="GO:0016251">
    <property type="term" value="F:RNA polymerase II general transcription initiation factor activity"/>
    <property type="evidence" value="ECO:0007669"/>
    <property type="project" value="EnsemblFungi"/>
</dbReference>
<dbReference type="GO" id="GO:0006289">
    <property type="term" value="P:nucleotide-excision repair"/>
    <property type="evidence" value="ECO:0000318"/>
    <property type="project" value="GO_Central"/>
</dbReference>
<dbReference type="GO" id="GO:0006367">
    <property type="term" value="P:transcription initiation at RNA polymerase II promoter"/>
    <property type="evidence" value="ECO:0007669"/>
    <property type="project" value="EnsemblFungi"/>
</dbReference>
<dbReference type="FunFam" id="3.30.70.2610:FF:000001">
    <property type="entry name" value="General transcription factor IIH subunit 4"/>
    <property type="match status" value="1"/>
</dbReference>
<dbReference type="Gene3D" id="3.30.70.2610">
    <property type="match status" value="1"/>
</dbReference>
<dbReference type="InterPro" id="IPR040662">
    <property type="entry name" value="Tfb2_C"/>
</dbReference>
<dbReference type="InterPro" id="IPR004598">
    <property type="entry name" value="TFIIH_p52/Tfb2"/>
</dbReference>
<dbReference type="NCBIfam" id="TIGR00625">
    <property type="entry name" value="tfb2"/>
    <property type="match status" value="1"/>
</dbReference>
<dbReference type="PANTHER" id="PTHR13152:SF0">
    <property type="entry name" value="GENERAL TRANSCRIPTION FACTOR IIH SUBUNIT 4"/>
    <property type="match status" value="1"/>
</dbReference>
<dbReference type="PANTHER" id="PTHR13152">
    <property type="entry name" value="TFIIH, POLYPEPTIDE 4"/>
    <property type="match status" value="1"/>
</dbReference>
<dbReference type="Pfam" id="PF03849">
    <property type="entry name" value="Tfb2"/>
    <property type="match status" value="1"/>
</dbReference>
<dbReference type="Pfam" id="PF18307">
    <property type="entry name" value="Tfb2_C"/>
    <property type="match status" value="1"/>
</dbReference>
<proteinExistence type="inferred from homology"/>
<keyword id="KW-0227">DNA damage</keyword>
<keyword id="KW-0234">DNA repair</keyword>
<keyword id="KW-0539">Nucleus</keyword>
<keyword id="KW-1185">Reference proteome</keyword>
<keyword id="KW-0804">Transcription</keyword>
<keyword id="KW-0805">Transcription regulation</keyword>
<comment type="function">
    <text evidence="2">Component of the general transcription and DNA repair factor IIH (TFIIH) core complex, which is involved in general and transcription-coupled nucleotide excision repair (NER) of damaged DNA and, when complexed to TFIIK, in RNA transcription by RNA polymerase II. In NER, TFIIH acts by opening DNA around the lesion to allow the excision of the damaged oligonucleotide and its replacement by a new DNA fragment. In transcription, TFIIH has an essential role in transcription initiation. When the pre-initiation complex (PIC) has been established, TFIIH is required for promoter opening and promoter escape. Phosphorylation of the C-terminal tail (CTD) of the largest subunit of RNA polymerase II by the kinase module TFIIK controls the initiation of transcription.</text>
</comment>
<comment type="subunit">
    <text evidence="2">Component of the 7-subunit TFIIH core complex composed of XPB/SSL2, XPD/RAD3, SSL1, TFB1, TFB2, TFB4 and TFB5, which is active in NER. The core complex associates with the 3-subunit CTD-kinase module TFIIK composed of CCL1, KIN28 and TFB3 to form the 10-subunit holoenzyme (holo-TFIIH) active in transcription.</text>
</comment>
<comment type="subcellular location">
    <subcellularLocation>
        <location evidence="1">Nucleus</location>
    </subcellularLocation>
</comment>
<comment type="similarity">
    <text evidence="3">Belongs to the TFB2 family.</text>
</comment>
<name>TFB2_EREGS</name>
<feature type="chain" id="PRO_0000119262" description="General transcription and DNA repair factor IIH subunit TFB2">
    <location>
        <begin position="1"/>
        <end position="514"/>
    </location>
</feature>
<accession>Q75B51</accession>
<gene>
    <name type="primary">TFB2</name>
    <name type="ordered locus">ADL274W</name>
</gene>
<sequence>MEPTPGIIHDGHNLFKNTVNEYLQELPQPVQSRLYQSPATCLAIYRLLSPMAKFFIMSMIFQDEEVSLRDLDRWVKPDAKFQLHDAIKSMKLLHLITEGRSGQPLMVQLNSIFKESFKNALTGGEVKNSFGNVVEEENDPVTMAMLDSYAADKWETILHFMVGTPLTKSPGKNVLSLLRHSKLMEVDESSKELKITNEGFQFLLQDANAQIWTLLLQYLTMAETFQMDPVDVLNLIFMIGALELGKAYSVVGLSETQKTMLQDLRDYGLVFQKQSNLSKFYPTRLATMLTSDVVSIRSASGAVNSVLRQRAEGVDGKVLNGTALGDDDLQAGGEGALDGALIVETNFKLYSYSNSPLQIAILSLFIHLKTRFQNMVTGQITRESIRRALHNGITADQIIAYMETHAHPQMRRLAGDNLEKKLELDPNCRDTLQVLPPTVVDQIKLWQLELDRIISYDGYLFRDFDNLQEYQVLAQYARDIGVLLWSDDKKKMFFVSKEGNAQVIDFHKRKFRKK</sequence>
<reference key="1">
    <citation type="journal article" date="2004" name="Science">
        <title>The Ashbya gossypii genome as a tool for mapping the ancient Saccharomyces cerevisiae genome.</title>
        <authorList>
            <person name="Dietrich F.S."/>
            <person name="Voegeli S."/>
            <person name="Brachat S."/>
            <person name="Lerch A."/>
            <person name="Gates K."/>
            <person name="Steiner S."/>
            <person name="Mohr C."/>
            <person name="Poehlmann R."/>
            <person name="Luedi P."/>
            <person name="Choi S."/>
            <person name="Wing R.A."/>
            <person name="Flavier A."/>
            <person name="Gaffney T.D."/>
            <person name="Philippsen P."/>
        </authorList>
    </citation>
    <scope>NUCLEOTIDE SEQUENCE [LARGE SCALE GENOMIC DNA]</scope>
    <source>
        <strain>ATCC 10895 / CBS 109.51 / FGSC 9923 / NRRL Y-1056</strain>
    </source>
</reference>
<reference key="2">
    <citation type="journal article" date="2013" name="G3 (Bethesda)">
        <title>Genomes of Ashbya fungi isolated from insects reveal four mating-type loci, numerous translocations, lack of transposons, and distinct gene duplications.</title>
        <authorList>
            <person name="Dietrich F.S."/>
            <person name="Voegeli S."/>
            <person name="Kuo S."/>
            <person name="Philippsen P."/>
        </authorList>
    </citation>
    <scope>GENOME REANNOTATION</scope>
    <source>
        <strain>ATCC 10895 / CBS 109.51 / FGSC 9923 / NRRL Y-1056</strain>
    </source>
</reference>